<feature type="chain" id="PRO_0000105545" description="Flagellar hook-basal body complex protein FliE">
    <location>
        <begin position="1"/>
        <end position="103"/>
    </location>
</feature>
<reference key="1">
    <citation type="journal article" date="2003" name="Proc. Natl. Acad. Sci. U.S.A.">
        <title>The complete genome sequence of the carcinogenic bacterium Helicobacter hepaticus.</title>
        <authorList>
            <person name="Suerbaum S."/>
            <person name="Josenhans C."/>
            <person name="Sterzenbach T."/>
            <person name="Drescher B."/>
            <person name="Brandt P."/>
            <person name="Bell M."/>
            <person name="Droege M."/>
            <person name="Fartmann B."/>
            <person name="Fischer H.-P."/>
            <person name="Ge Z."/>
            <person name="Hoerster A."/>
            <person name="Holland R."/>
            <person name="Klein K."/>
            <person name="Koenig J."/>
            <person name="Macko L."/>
            <person name="Mendz G.L."/>
            <person name="Nyakatura G."/>
            <person name="Schauer D.B."/>
            <person name="Shen Z."/>
            <person name="Weber J."/>
            <person name="Frosch M."/>
            <person name="Fox J.G."/>
        </authorList>
    </citation>
    <scope>NUCLEOTIDE SEQUENCE [LARGE SCALE GENOMIC DNA]</scope>
    <source>
        <strain>ATCC 51449 / 3B1</strain>
    </source>
</reference>
<dbReference type="EMBL" id="AE017125">
    <property type="protein sequence ID" value="AAP78006.1"/>
    <property type="molecule type" value="Genomic_DNA"/>
</dbReference>
<dbReference type="RefSeq" id="WP_011116249.1">
    <property type="nucleotide sequence ID" value="NC_004917.1"/>
</dbReference>
<dbReference type="SMR" id="Q7VGB3"/>
<dbReference type="STRING" id="235279.HH_1409"/>
<dbReference type="KEGG" id="hhe:HH_1409"/>
<dbReference type="eggNOG" id="COG1677">
    <property type="taxonomic scope" value="Bacteria"/>
</dbReference>
<dbReference type="HOGENOM" id="CLU_147249_3_1_7"/>
<dbReference type="OrthoDB" id="285952at2"/>
<dbReference type="Proteomes" id="UP000002495">
    <property type="component" value="Chromosome"/>
</dbReference>
<dbReference type="GO" id="GO:0009425">
    <property type="term" value="C:bacterial-type flagellum basal body"/>
    <property type="evidence" value="ECO:0007669"/>
    <property type="project" value="UniProtKB-SubCell"/>
</dbReference>
<dbReference type="GO" id="GO:0003774">
    <property type="term" value="F:cytoskeletal motor activity"/>
    <property type="evidence" value="ECO:0007669"/>
    <property type="project" value="InterPro"/>
</dbReference>
<dbReference type="GO" id="GO:0005198">
    <property type="term" value="F:structural molecule activity"/>
    <property type="evidence" value="ECO:0007669"/>
    <property type="project" value="InterPro"/>
</dbReference>
<dbReference type="GO" id="GO:0071973">
    <property type="term" value="P:bacterial-type flagellum-dependent cell motility"/>
    <property type="evidence" value="ECO:0007669"/>
    <property type="project" value="InterPro"/>
</dbReference>
<dbReference type="HAMAP" id="MF_00724">
    <property type="entry name" value="FliE"/>
    <property type="match status" value="1"/>
</dbReference>
<dbReference type="InterPro" id="IPR001624">
    <property type="entry name" value="FliE"/>
</dbReference>
<dbReference type="NCBIfam" id="TIGR00205">
    <property type="entry name" value="fliE"/>
    <property type="match status" value="1"/>
</dbReference>
<dbReference type="PANTHER" id="PTHR34653">
    <property type="match status" value="1"/>
</dbReference>
<dbReference type="PANTHER" id="PTHR34653:SF1">
    <property type="entry name" value="FLAGELLAR HOOK-BASAL BODY COMPLEX PROTEIN FLIE"/>
    <property type="match status" value="1"/>
</dbReference>
<dbReference type="Pfam" id="PF02049">
    <property type="entry name" value="FliE"/>
    <property type="match status" value="1"/>
</dbReference>
<dbReference type="PRINTS" id="PR01006">
    <property type="entry name" value="FLGHOOKFLIE"/>
</dbReference>
<gene>
    <name evidence="1" type="primary">fliE</name>
    <name type="ordered locus">HH_1409</name>
</gene>
<keyword id="KW-0975">Bacterial flagellum</keyword>
<keyword id="KW-1185">Reference proteome</keyword>
<sequence length="103" mass="11526">MSNKFGVITNDIQPIGTNNKNVENIKNRQDGLDFIKTLKDSIQDVNTEQQTSEKALADIASGQVKDLHQAAIAINRAENSMKVMLEVRNKAINAYKEILRTQI</sequence>
<comment type="subcellular location">
    <subcellularLocation>
        <location evidence="1">Bacterial flagellum basal body</location>
    </subcellularLocation>
</comment>
<comment type="similarity">
    <text evidence="1">Belongs to the FliE family.</text>
</comment>
<evidence type="ECO:0000255" key="1">
    <source>
        <dbReference type="HAMAP-Rule" id="MF_00724"/>
    </source>
</evidence>
<protein>
    <recommendedName>
        <fullName evidence="1">Flagellar hook-basal body complex protein FliE</fullName>
    </recommendedName>
</protein>
<organism>
    <name type="scientific">Helicobacter hepaticus (strain ATCC 51449 / 3B1)</name>
    <dbReference type="NCBI Taxonomy" id="235279"/>
    <lineage>
        <taxon>Bacteria</taxon>
        <taxon>Pseudomonadati</taxon>
        <taxon>Campylobacterota</taxon>
        <taxon>Epsilonproteobacteria</taxon>
        <taxon>Campylobacterales</taxon>
        <taxon>Helicobacteraceae</taxon>
        <taxon>Helicobacter</taxon>
    </lineage>
</organism>
<proteinExistence type="inferred from homology"/>
<name>FLIE_HELHP</name>
<accession>Q7VGB3</accession>